<gene>
    <name evidence="1" type="primary">rpmE2</name>
    <name type="synonym">rpmE</name>
    <name type="ordered locus">str0746</name>
</gene>
<protein>
    <recommendedName>
        <fullName evidence="1">Large ribosomal subunit protein bL31B</fullName>
    </recommendedName>
    <alternativeName>
        <fullName evidence="2">50S ribosomal protein L31 type B</fullName>
    </alternativeName>
</protein>
<name>RL31B_STRT1</name>
<feature type="chain" id="PRO_0000173276" description="Large ribosomal subunit protein bL31B">
    <location>
        <begin position="1"/>
        <end position="80"/>
    </location>
</feature>
<reference key="1">
    <citation type="journal article" date="2004" name="Nat. Biotechnol.">
        <title>Complete sequence and comparative genome analysis of the dairy bacterium Streptococcus thermophilus.</title>
        <authorList>
            <person name="Bolotin A."/>
            <person name="Quinquis B."/>
            <person name="Renault P."/>
            <person name="Sorokin A."/>
            <person name="Ehrlich S.D."/>
            <person name="Kulakauskas S."/>
            <person name="Lapidus A."/>
            <person name="Goltsman E."/>
            <person name="Mazur M."/>
            <person name="Pusch G.D."/>
            <person name="Fonstein M."/>
            <person name="Overbeek R."/>
            <person name="Kyprides N."/>
            <person name="Purnelle B."/>
            <person name="Prozzi D."/>
            <person name="Ngui K."/>
            <person name="Masuy D."/>
            <person name="Hancy F."/>
            <person name="Burteau S."/>
            <person name="Boutry M."/>
            <person name="Delcour J."/>
            <person name="Goffeau A."/>
            <person name="Hols P."/>
        </authorList>
    </citation>
    <scope>NUCLEOTIDE SEQUENCE [LARGE SCALE GENOMIC DNA]</scope>
    <source>
        <strain>CNRZ 1066</strain>
    </source>
</reference>
<keyword id="KW-0687">Ribonucleoprotein</keyword>
<keyword id="KW-0689">Ribosomal protein</keyword>
<accession>Q5M0C3</accession>
<sequence>MKKDIHPDYRPVVFMDTTTGYQFLSGSTKHSNETVEFEGETYPLIRVEISSDSHPFYTGRQKFTQADGRVDRFNKKYGLK</sequence>
<organism>
    <name type="scientific">Streptococcus thermophilus (strain CNRZ 1066)</name>
    <dbReference type="NCBI Taxonomy" id="299768"/>
    <lineage>
        <taxon>Bacteria</taxon>
        <taxon>Bacillati</taxon>
        <taxon>Bacillota</taxon>
        <taxon>Bacilli</taxon>
        <taxon>Lactobacillales</taxon>
        <taxon>Streptococcaceae</taxon>
        <taxon>Streptococcus</taxon>
    </lineage>
</organism>
<comment type="subunit">
    <text evidence="1">Part of the 50S ribosomal subunit.</text>
</comment>
<comment type="similarity">
    <text evidence="1">Belongs to the bacterial ribosomal protein bL31 family. Type B subfamily.</text>
</comment>
<comment type="sequence caution" evidence="2">
    <conflict type="erroneous initiation">
        <sequence resource="EMBL-CDS" id="AAV62339"/>
    </conflict>
</comment>
<dbReference type="EMBL" id="CP000024">
    <property type="protein sequence ID" value="AAV62339.1"/>
    <property type="status" value="ALT_INIT"/>
    <property type="molecule type" value="Genomic_DNA"/>
</dbReference>
<dbReference type="RefSeq" id="WP_002945948.1">
    <property type="nucleotide sequence ID" value="NC_006449.1"/>
</dbReference>
<dbReference type="SMR" id="Q5M0C3"/>
<dbReference type="KEGG" id="stc:str0746"/>
<dbReference type="HOGENOM" id="CLU_114306_2_2_9"/>
<dbReference type="GO" id="GO:1990904">
    <property type="term" value="C:ribonucleoprotein complex"/>
    <property type="evidence" value="ECO:0007669"/>
    <property type="project" value="UniProtKB-KW"/>
</dbReference>
<dbReference type="GO" id="GO:0005840">
    <property type="term" value="C:ribosome"/>
    <property type="evidence" value="ECO:0007669"/>
    <property type="project" value="UniProtKB-KW"/>
</dbReference>
<dbReference type="GO" id="GO:0003735">
    <property type="term" value="F:structural constituent of ribosome"/>
    <property type="evidence" value="ECO:0007669"/>
    <property type="project" value="InterPro"/>
</dbReference>
<dbReference type="GO" id="GO:0006412">
    <property type="term" value="P:translation"/>
    <property type="evidence" value="ECO:0007669"/>
    <property type="project" value="UniProtKB-UniRule"/>
</dbReference>
<dbReference type="Gene3D" id="4.10.830.30">
    <property type="entry name" value="Ribosomal protein L31"/>
    <property type="match status" value="1"/>
</dbReference>
<dbReference type="HAMAP" id="MF_00502">
    <property type="entry name" value="Ribosomal_bL31_2"/>
    <property type="match status" value="1"/>
</dbReference>
<dbReference type="InterPro" id="IPR034704">
    <property type="entry name" value="Ribosomal_bL28/bL31-like_sf"/>
</dbReference>
<dbReference type="InterPro" id="IPR002150">
    <property type="entry name" value="Ribosomal_bL31"/>
</dbReference>
<dbReference type="InterPro" id="IPR027493">
    <property type="entry name" value="Ribosomal_bL31_B"/>
</dbReference>
<dbReference type="InterPro" id="IPR042105">
    <property type="entry name" value="Ribosomal_bL31_sf"/>
</dbReference>
<dbReference type="NCBIfam" id="TIGR00105">
    <property type="entry name" value="L31"/>
    <property type="match status" value="1"/>
</dbReference>
<dbReference type="NCBIfam" id="NF002462">
    <property type="entry name" value="PRK01678.1"/>
    <property type="match status" value="1"/>
</dbReference>
<dbReference type="PANTHER" id="PTHR33280">
    <property type="entry name" value="50S RIBOSOMAL PROTEIN L31, CHLOROPLASTIC"/>
    <property type="match status" value="1"/>
</dbReference>
<dbReference type="PANTHER" id="PTHR33280:SF1">
    <property type="entry name" value="LARGE RIBOSOMAL SUBUNIT PROTEIN BL31C"/>
    <property type="match status" value="1"/>
</dbReference>
<dbReference type="Pfam" id="PF01197">
    <property type="entry name" value="Ribosomal_L31"/>
    <property type="match status" value="1"/>
</dbReference>
<dbReference type="PRINTS" id="PR01249">
    <property type="entry name" value="RIBOSOMALL31"/>
</dbReference>
<dbReference type="SUPFAM" id="SSF143800">
    <property type="entry name" value="L28p-like"/>
    <property type="match status" value="1"/>
</dbReference>
<dbReference type="PROSITE" id="PS01143">
    <property type="entry name" value="RIBOSOMAL_L31"/>
    <property type="match status" value="1"/>
</dbReference>
<proteinExistence type="inferred from homology"/>
<evidence type="ECO:0000255" key="1">
    <source>
        <dbReference type="HAMAP-Rule" id="MF_00502"/>
    </source>
</evidence>
<evidence type="ECO:0000305" key="2"/>